<feature type="chain" id="PRO_1000073925" description="UPF0060 membrane protein Bcep1808_1236">
    <location>
        <begin position="1"/>
        <end position="110"/>
    </location>
</feature>
<feature type="transmembrane region" description="Helical" evidence="1">
    <location>
        <begin position="9"/>
        <end position="29"/>
    </location>
</feature>
<feature type="transmembrane region" description="Helical" evidence="1">
    <location>
        <begin position="34"/>
        <end position="54"/>
    </location>
</feature>
<feature type="transmembrane region" description="Helical" evidence="1">
    <location>
        <begin position="66"/>
        <end position="86"/>
    </location>
</feature>
<gene>
    <name type="ordered locus">Bcep1808_1236</name>
</gene>
<protein>
    <recommendedName>
        <fullName evidence="1">UPF0060 membrane protein Bcep1808_1236</fullName>
    </recommendedName>
</protein>
<name>Y1236_BURVG</name>
<proteinExistence type="inferred from homology"/>
<sequence>MTELIRIAALFAVTAVAEIVGCYLPWLVLKGGRPVWLLVPAALSLALFAWLLTLHPSAAGRTYAAYGGVYIGVALLWLRVVDGVALTRWDAAGAALALGGMAMIALQPRA</sequence>
<evidence type="ECO:0000255" key="1">
    <source>
        <dbReference type="HAMAP-Rule" id="MF_00010"/>
    </source>
</evidence>
<dbReference type="EMBL" id="CP000614">
    <property type="protein sequence ID" value="ABO54246.1"/>
    <property type="molecule type" value="Genomic_DNA"/>
</dbReference>
<dbReference type="SMR" id="A4JD93"/>
<dbReference type="KEGG" id="bvi:Bcep1808_1236"/>
<dbReference type="eggNOG" id="COG1742">
    <property type="taxonomic scope" value="Bacteria"/>
</dbReference>
<dbReference type="HOGENOM" id="CLU_117653_2_0_4"/>
<dbReference type="Proteomes" id="UP000002287">
    <property type="component" value="Chromosome 1"/>
</dbReference>
<dbReference type="GO" id="GO:0005886">
    <property type="term" value="C:plasma membrane"/>
    <property type="evidence" value="ECO:0007669"/>
    <property type="project" value="UniProtKB-SubCell"/>
</dbReference>
<dbReference type="HAMAP" id="MF_00010">
    <property type="entry name" value="UPF0060"/>
    <property type="match status" value="1"/>
</dbReference>
<dbReference type="InterPro" id="IPR003844">
    <property type="entry name" value="UPF0060"/>
</dbReference>
<dbReference type="NCBIfam" id="NF002586">
    <property type="entry name" value="PRK02237.1"/>
    <property type="match status" value="1"/>
</dbReference>
<dbReference type="PANTHER" id="PTHR36116">
    <property type="entry name" value="UPF0060 MEMBRANE PROTEIN YNFA"/>
    <property type="match status" value="1"/>
</dbReference>
<dbReference type="PANTHER" id="PTHR36116:SF1">
    <property type="entry name" value="UPF0060 MEMBRANE PROTEIN YNFA"/>
    <property type="match status" value="1"/>
</dbReference>
<dbReference type="Pfam" id="PF02694">
    <property type="entry name" value="UPF0060"/>
    <property type="match status" value="1"/>
</dbReference>
<keyword id="KW-0997">Cell inner membrane</keyword>
<keyword id="KW-1003">Cell membrane</keyword>
<keyword id="KW-0472">Membrane</keyword>
<keyword id="KW-0812">Transmembrane</keyword>
<keyword id="KW-1133">Transmembrane helix</keyword>
<reference key="1">
    <citation type="submission" date="2007-03" db="EMBL/GenBank/DDBJ databases">
        <title>Complete sequence of chromosome 1 of Burkholderia vietnamiensis G4.</title>
        <authorList>
            <consortium name="US DOE Joint Genome Institute"/>
            <person name="Copeland A."/>
            <person name="Lucas S."/>
            <person name="Lapidus A."/>
            <person name="Barry K."/>
            <person name="Detter J.C."/>
            <person name="Glavina del Rio T."/>
            <person name="Hammon N."/>
            <person name="Israni S."/>
            <person name="Dalin E."/>
            <person name="Tice H."/>
            <person name="Pitluck S."/>
            <person name="Chain P."/>
            <person name="Malfatti S."/>
            <person name="Shin M."/>
            <person name="Vergez L."/>
            <person name="Schmutz J."/>
            <person name="Larimer F."/>
            <person name="Land M."/>
            <person name="Hauser L."/>
            <person name="Kyrpides N."/>
            <person name="Tiedje J."/>
            <person name="Richardson P."/>
        </authorList>
    </citation>
    <scope>NUCLEOTIDE SEQUENCE [LARGE SCALE GENOMIC DNA]</scope>
    <source>
        <strain>G4 / LMG 22486</strain>
    </source>
</reference>
<organism>
    <name type="scientific">Burkholderia vietnamiensis (strain G4 / LMG 22486)</name>
    <name type="common">Burkholderia cepacia (strain R1808)</name>
    <dbReference type="NCBI Taxonomy" id="269482"/>
    <lineage>
        <taxon>Bacteria</taxon>
        <taxon>Pseudomonadati</taxon>
        <taxon>Pseudomonadota</taxon>
        <taxon>Betaproteobacteria</taxon>
        <taxon>Burkholderiales</taxon>
        <taxon>Burkholderiaceae</taxon>
        <taxon>Burkholderia</taxon>
        <taxon>Burkholderia cepacia complex</taxon>
    </lineage>
</organism>
<accession>A4JD93</accession>
<comment type="subcellular location">
    <subcellularLocation>
        <location evidence="1">Cell inner membrane</location>
        <topology evidence="1">Multi-pass membrane protein</topology>
    </subcellularLocation>
</comment>
<comment type="similarity">
    <text evidence="1">Belongs to the UPF0060 family.</text>
</comment>